<accession>O81908</accession>
<name>PPR2_ARATH</name>
<evidence type="ECO:0000255" key="1"/>
<evidence type="ECO:0000305" key="2"/>
<sequence length="710" mass="80832">MVSSVPKLHALFVSKSQPVLRAAKVTNEERSTKSKLARSLARAVNSNPWSDELESSLSSLHPSQTISRTTVLQTLRLIKVPADGLRFFDWVSNKGFSHKEQSFFLMLEFLGRARNLNVARNFLFSIERRSNGCVKLQDRYFNSLIRSYGNAGLFQESVKLFQTMKQMGISPSVLTFNSLLSILLKRGRTGMAHDLFDEMRRTYGVTPDSYTFNTLINGFCKNSMVDEAFRIFKDMELYHCNPDVVTYNTIIDGLCRAGKVKIAHNVLSGMLKKATDVHPNVVSYTTLVRGYCMKQEIDEAVLVFHDMLSRGLKPNAVTYNTLIKGLSEAHRYDEIKDILIGGNDAFTTFAPDACTFNILIKAHCDAGHLDAAMKVFQEMLNMKLHPDSASYSVLIRTLCMRNEFDRAETLFNELFEKEVLLGKDECKPLAAAYNPMFEYLCANGKTKQAEKVFRQLMKRGVQDPPSYKTLITGHCREGKFKPAYELLVLMLRREFVPDLETYELLIDGLLKIGEALLAHDTLQRMLRSSYLPVATTFHSVLAELAKRKFANESFCLVTLMLEKRIRQNIDLSTQVVRLLFSSAQKEKAFLIVRLLYDNGYLVKMEELLGYLCENRKLLDAHTLVLFCLEKSQMVDIDTCNTVIEGLCKHKRHSEAFSLYNELVELGNHQQLSCHVVLRNALEAAGKWEELQFVSKRMATLRESDDCSVLE</sequence>
<proteinExistence type="evidence at transcript level"/>
<dbReference type="EMBL" id="U89959">
    <property type="protein sequence ID" value="AAC24378.1"/>
    <property type="status" value="ALT_SEQ"/>
    <property type="molecule type" value="Genomic_DNA"/>
</dbReference>
<dbReference type="EMBL" id="CP002684">
    <property type="protein sequence ID" value="AEE27372.1"/>
    <property type="molecule type" value="Genomic_DNA"/>
</dbReference>
<dbReference type="PIR" id="F86152">
    <property type="entry name" value="F86152"/>
</dbReference>
<dbReference type="RefSeq" id="NP_171708.1">
    <property type="nucleotide sequence ID" value="NM_100086.4"/>
</dbReference>
<dbReference type="SMR" id="O81908"/>
<dbReference type="FunCoup" id="O81908">
    <property type="interactions" value="482"/>
</dbReference>
<dbReference type="STRING" id="3702.O81908"/>
<dbReference type="PaxDb" id="3702-AT1G02060.1"/>
<dbReference type="ProteomicsDB" id="236585"/>
<dbReference type="EnsemblPlants" id="AT1G02060.1">
    <property type="protein sequence ID" value="AT1G02060.1"/>
    <property type="gene ID" value="AT1G02060"/>
</dbReference>
<dbReference type="GeneID" id="839279"/>
<dbReference type="Gramene" id="AT1G02060.1">
    <property type="protein sequence ID" value="AT1G02060.1"/>
    <property type="gene ID" value="AT1G02060"/>
</dbReference>
<dbReference type="KEGG" id="ath:AT1G02060"/>
<dbReference type="Araport" id="AT1G02060"/>
<dbReference type="TAIR" id="AT1G02060"/>
<dbReference type="eggNOG" id="KOG4197">
    <property type="taxonomic scope" value="Eukaryota"/>
</dbReference>
<dbReference type="HOGENOM" id="CLU_002706_49_24_1"/>
<dbReference type="InParanoid" id="O81908"/>
<dbReference type="OMA" id="DPPSYKT"/>
<dbReference type="PhylomeDB" id="O81908"/>
<dbReference type="PRO" id="PR:O81908"/>
<dbReference type="Proteomes" id="UP000006548">
    <property type="component" value="Chromosome 1"/>
</dbReference>
<dbReference type="ExpressionAtlas" id="O81908">
    <property type="expression patterns" value="baseline and differential"/>
</dbReference>
<dbReference type="GO" id="GO:0009507">
    <property type="term" value="C:chloroplast"/>
    <property type="evidence" value="ECO:0007669"/>
    <property type="project" value="UniProtKB-SubCell"/>
</dbReference>
<dbReference type="Gene3D" id="1.25.40.10">
    <property type="entry name" value="Tetratricopeptide repeat domain"/>
    <property type="match status" value="6"/>
</dbReference>
<dbReference type="InterPro" id="IPR002885">
    <property type="entry name" value="Pentatricopeptide_rpt"/>
</dbReference>
<dbReference type="InterPro" id="IPR011990">
    <property type="entry name" value="TPR-like_helical_dom_sf"/>
</dbReference>
<dbReference type="NCBIfam" id="TIGR00756">
    <property type="entry name" value="PPR"/>
    <property type="match status" value="10"/>
</dbReference>
<dbReference type="PANTHER" id="PTHR47932">
    <property type="entry name" value="ATPASE EXPRESSION PROTEIN 3"/>
    <property type="match status" value="1"/>
</dbReference>
<dbReference type="PANTHER" id="PTHR47932:SF62">
    <property type="entry name" value="EXPRESSED PROTEIN"/>
    <property type="match status" value="1"/>
</dbReference>
<dbReference type="Pfam" id="PF01535">
    <property type="entry name" value="PPR"/>
    <property type="match status" value="2"/>
</dbReference>
<dbReference type="Pfam" id="PF13041">
    <property type="entry name" value="PPR_2"/>
    <property type="match status" value="5"/>
</dbReference>
<dbReference type="SUPFAM" id="SSF48452">
    <property type="entry name" value="TPR-like"/>
    <property type="match status" value="1"/>
</dbReference>
<dbReference type="PROSITE" id="PS51375">
    <property type="entry name" value="PPR"/>
    <property type="match status" value="13"/>
</dbReference>
<gene>
    <name type="ordered locus">At1g02060</name>
    <name type="ORF">T7I23.14</name>
</gene>
<protein>
    <recommendedName>
        <fullName>Pentatricopeptide repeat-containing protein At1g02060, chloroplastic</fullName>
    </recommendedName>
</protein>
<keyword id="KW-0150">Chloroplast</keyword>
<keyword id="KW-0934">Plastid</keyword>
<keyword id="KW-1185">Reference proteome</keyword>
<keyword id="KW-0677">Repeat</keyword>
<keyword id="KW-0809">Transit peptide</keyword>
<comment type="subcellular location">
    <subcellularLocation>
        <location evidence="2">Plastid</location>
        <location evidence="2">Chloroplast</location>
    </subcellularLocation>
</comment>
<comment type="similarity">
    <text evidence="2">Belongs to the PPR family. P subfamily.</text>
</comment>
<comment type="sequence caution" evidence="2">
    <conflict type="erroneous gene model prediction">
        <sequence resource="EMBL-CDS" id="AAC24378"/>
    </conflict>
</comment>
<comment type="online information" name="Pentatricopeptide repeat proteins">
    <link uri="https://ppr.plantenergy.uwa.edu.au"/>
</comment>
<reference key="1">
    <citation type="journal article" date="2000" name="Nature">
        <title>Sequence and analysis of chromosome 1 of the plant Arabidopsis thaliana.</title>
        <authorList>
            <person name="Theologis A."/>
            <person name="Ecker J.R."/>
            <person name="Palm C.J."/>
            <person name="Federspiel N.A."/>
            <person name="Kaul S."/>
            <person name="White O."/>
            <person name="Alonso J."/>
            <person name="Altafi H."/>
            <person name="Araujo R."/>
            <person name="Bowman C.L."/>
            <person name="Brooks S.Y."/>
            <person name="Buehler E."/>
            <person name="Chan A."/>
            <person name="Chao Q."/>
            <person name="Chen H."/>
            <person name="Cheuk R.F."/>
            <person name="Chin C.W."/>
            <person name="Chung M.K."/>
            <person name="Conn L."/>
            <person name="Conway A.B."/>
            <person name="Conway A.R."/>
            <person name="Creasy T.H."/>
            <person name="Dewar K."/>
            <person name="Dunn P."/>
            <person name="Etgu P."/>
            <person name="Feldblyum T.V."/>
            <person name="Feng J.-D."/>
            <person name="Fong B."/>
            <person name="Fujii C.Y."/>
            <person name="Gill J.E."/>
            <person name="Goldsmith A.D."/>
            <person name="Haas B."/>
            <person name="Hansen N.F."/>
            <person name="Hughes B."/>
            <person name="Huizar L."/>
            <person name="Hunter J.L."/>
            <person name="Jenkins J."/>
            <person name="Johnson-Hopson C."/>
            <person name="Khan S."/>
            <person name="Khaykin E."/>
            <person name="Kim C.J."/>
            <person name="Koo H.L."/>
            <person name="Kremenetskaia I."/>
            <person name="Kurtz D.B."/>
            <person name="Kwan A."/>
            <person name="Lam B."/>
            <person name="Langin-Hooper S."/>
            <person name="Lee A."/>
            <person name="Lee J.M."/>
            <person name="Lenz C.A."/>
            <person name="Li J.H."/>
            <person name="Li Y.-P."/>
            <person name="Lin X."/>
            <person name="Liu S.X."/>
            <person name="Liu Z.A."/>
            <person name="Luros J.S."/>
            <person name="Maiti R."/>
            <person name="Marziali A."/>
            <person name="Militscher J."/>
            <person name="Miranda M."/>
            <person name="Nguyen M."/>
            <person name="Nierman W.C."/>
            <person name="Osborne B.I."/>
            <person name="Pai G."/>
            <person name="Peterson J."/>
            <person name="Pham P.K."/>
            <person name="Rizzo M."/>
            <person name="Rooney T."/>
            <person name="Rowley D."/>
            <person name="Sakano H."/>
            <person name="Salzberg S.L."/>
            <person name="Schwartz J.R."/>
            <person name="Shinn P."/>
            <person name="Southwick A.M."/>
            <person name="Sun H."/>
            <person name="Tallon L.J."/>
            <person name="Tambunga G."/>
            <person name="Toriumi M.J."/>
            <person name="Town C.D."/>
            <person name="Utterback T."/>
            <person name="Van Aken S."/>
            <person name="Vaysberg M."/>
            <person name="Vysotskaia V.S."/>
            <person name="Walker M."/>
            <person name="Wu D."/>
            <person name="Yu G."/>
            <person name="Fraser C.M."/>
            <person name="Venter J.C."/>
            <person name="Davis R.W."/>
        </authorList>
    </citation>
    <scope>NUCLEOTIDE SEQUENCE [LARGE SCALE GENOMIC DNA]</scope>
    <source>
        <strain>cv. Columbia</strain>
    </source>
</reference>
<reference key="2">
    <citation type="journal article" date="2017" name="Plant J.">
        <title>Araport11: a complete reannotation of the Arabidopsis thaliana reference genome.</title>
        <authorList>
            <person name="Cheng C.Y."/>
            <person name="Krishnakumar V."/>
            <person name="Chan A.P."/>
            <person name="Thibaud-Nissen F."/>
            <person name="Schobel S."/>
            <person name="Town C.D."/>
        </authorList>
    </citation>
    <scope>GENOME REANNOTATION</scope>
    <source>
        <strain>cv. Columbia</strain>
    </source>
</reference>
<reference key="3">
    <citation type="journal article" date="2004" name="Plant Cell">
        <title>Genome-wide analysis of Arabidopsis pentatricopeptide repeat proteins reveals their essential role in organelle biogenesis.</title>
        <authorList>
            <person name="Lurin C."/>
            <person name="Andres C."/>
            <person name="Aubourg S."/>
            <person name="Bellaoui M."/>
            <person name="Bitton F."/>
            <person name="Bruyere C."/>
            <person name="Caboche M."/>
            <person name="Debast C."/>
            <person name="Gualberto J."/>
            <person name="Hoffmann B."/>
            <person name="Lecharny A."/>
            <person name="Le Ret M."/>
            <person name="Martin-Magniette M.-L."/>
            <person name="Mireau H."/>
            <person name="Peeters N."/>
            <person name="Renou J.-P."/>
            <person name="Szurek B."/>
            <person name="Taconnat L."/>
            <person name="Small I."/>
        </authorList>
    </citation>
    <scope>GENE FAMILY</scope>
</reference>
<feature type="transit peptide" description="Chloroplast" evidence="1">
    <location>
        <begin position="1"/>
        <end position="21"/>
    </location>
</feature>
<feature type="chain" id="PRO_0000342743" description="Pentatricopeptide repeat-containing protein At1g02060, chloroplastic">
    <location>
        <begin position="22"/>
        <end position="710"/>
    </location>
</feature>
<feature type="repeat" description="PPR 1">
    <location>
        <begin position="137"/>
        <end position="171"/>
    </location>
</feature>
<feature type="repeat" description="PPR 2">
    <location>
        <begin position="172"/>
        <end position="202"/>
    </location>
</feature>
<feature type="repeat" description="PPR 3">
    <location>
        <begin position="208"/>
        <end position="242"/>
    </location>
</feature>
<feature type="repeat" description="PPR 4">
    <location>
        <begin position="243"/>
        <end position="277"/>
    </location>
</feature>
<feature type="repeat" description="PPR 5">
    <location>
        <begin position="280"/>
        <end position="314"/>
    </location>
</feature>
<feature type="repeat" description="PPR 6">
    <location>
        <begin position="315"/>
        <end position="351"/>
    </location>
</feature>
<feature type="repeat" description="PPR 7">
    <location>
        <begin position="352"/>
        <end position="386"/>
    </location>
</feature>
<feature type="repeat" description="PPR 8">
    <location>
        <begin position="387"/>
        <end position="421"/>
    </location>
</feature>
<feature type="repeat" description="PPR 9">
    <location>
        <begin position="429"/>
        <end position="459"/>
    </location>
</feature>
<feature type="repeat" description="PPR 10">
    <location>
        <begin position="463"/>
        <end position="497"/>
    </location>
</feature>
<feature type="repeat" description="PPR 11">
    <location>
        <begin position="498"/>
        <end position="532"/>
    </location>
</feature>
<feature type="repeat" description="PPR 12">
    <location>
        <begin position="533"/>
        <end position="567"/>
    </location>
</feature>
<organism>
    <name type="scientific">Arabidopsis thaliana</name>
    <name type="common">Mouse-ear cress</name>
    <dbReference type="NCBI Taxonomy" id="3702"/>
    <lineage>
        <taxon>Eukaryota</taxon>
        <taxon>Viridiplantae</taxon>
        <taxon>Streptophyta</taxon>
        <taxon>Embryophyta</taxon>
        <taxon>Tracheophyta</taxon>
        <taxon>Spermatophyta</taxon>
        <taxon>Magnoliopsida</taxon>
        <taxon>eudicotyledons</taxon>
        <taxon>Gunneridae</taxon>
        <taxon>Pentapetalae</taxon>
        <taxon>rosids</taxon>
        <taxon>malvids</taxon>
        <taxon>Brassicales</taxon>
        <taxon>Brassicaceae</taxon>
        <taxon>Camelineae</taxon>
        <taxon>Arabidopsis</taxon>
    </lineage>
</organism>